<gene>
    <name evidence="1" type="primary">pelA</name>
    <name type="ordered locus">YG5714_2164</name>
</gene>
<proteinExistence type="inferred from homology"/>
<comment type="function">
    <text evidence="1">May function in recognizing stalled ribosomes, interact with stem-loop structures in stalled mRNA molecules, and effect endonucleolytic cleavage of the mRNA. May play a role in the release non-functional ribosomes and degradation of damaged mRNAs. Has endoribonuclease activity.</text>
</comment>
<comment type="cofactor">
    <cofactor evidence="1">
        <name>a divalent metal cation</name>
        <dbReference type="ChEBI" id="CHEBI:60240"/>
    </cofactor>
</comment>
<comment type="subunit">
    <text evidence="1">Monomer.</text>
</comment>
<comment type="subcellular location">
    <subcellularLocation>
        <location evidence="1">Cytoplasm</location>
    </subcellularLocation>
</comment>
<comment type="domain">
    <text evidence="1">The N-terminal domain has the RNA-binding Sm fold. It harbors the endoribonuclease activity.</text>
</comment>
<comment type="similarity">
    <text evidence="1">Belongs to the eukaryotic release factor 1 family. Pelota subfamily.</text>
</comment>
<keyword id="KW-0963">Cytoplasm</keyword>
<keyword id="KW-0255">Endonuclease</keyword>
<keyword id="KW-0378">Hydrolase</keyword>
<keyword id="KW-0479">Metal-binding</keyword>
<keyword id="KW-0540">Nuclease</keyword>
<protein>
    <recommendedName>
        <fullName evidence="1">Protein pelota homolog</fullName>
        <ecNumber evidence="1">3.1.-.-</ecNumber>
    </recommendedName>
</protein>
<sequence length="344" mass="39399">MRILEFDEKRQAAKLHIESEDDLWILHLILEKGDKVVAKTTRDIGLGKESRRIPMTIVLKVDYTEFQEFTNRLRIHGIIEDAPERFGIRGAHHTINLDIGDEIIIIKQQWNKYALDKLKKQADKRSKIIIALVDFDEYLIAIPFEQGIKILSEKSLRSLNEEEGIIEQNALEVATELAEYVKQYNPDAILLAGPGFFKEEVAKKVNNILKNKKVYIDSVSSATRAGLHEILKRDIIDKIMSDYEIAIGAKKMEKAMELLAKQPELVTYGLEQVKNAVEMGAVETVLLIEDLLSSNNQERLAIERILEDIENKRGEIILVPKESPIYFELKNLTGILAILRFRIN</sequence>
<reference key="1">
    <citation type="journal article" date="2009" name="Proc. Natl. Acad. Sci. U.S.A.">
        <title>Biogeography of the Sulfolobus islandicus pan-genome.</title>
        <authorList>
            <person name="Reno M.L."/>
            <person name="Held N.L."/>
            <person name="Fields C.J."/>
            <person name="Burke P.V."/>
            <person name="Whitaker R.J."/>
        </authorList>
    </citation>
    <scope>NUCLEOTIDE SEQUENCE [LARGE SCALE GENOMIC DNA]</scope>
    <source>
        <strain>Y.G.57.14 / Yellowstone #1</strain>
    </source>
</reference>
<evidence type="ECO:0000255" key="1">
    <source>
        <dbReference type="HAMAP-Rule" id="MF_01853"/>
    </source>
</evidence>
<dbReference type="EC" id="3.1.-.-" evidence="1"/>
<dbReference type="EMBL" id="CP001403">
    <property type="protein sequence ID" value="ACP46413.1"/>
    <property type="molecule type" value="Genomic_DNA"/>
</dbReference>
<dbReference type="RefSeq" id="WP_012714149.1">
    <property type="nucleotide sequence ID" value="NC_012622.1"/>
</dbReference>
<dbReference type="SMR" id="C3N8Q8"/>
<dbReference type="KEGG" id="siy:YG5714_2164"/>
<dbReference type="HOGENOM" id="CLU_023334_0_0_2"/>
<dbReference type="Proteomes" id="UP000002308">
    <property type="component" value="Chromosome"/>
</dbReference>
<dbReference type="GO" id="GO:0005737">
    <property type="term" value="C:cytoplasm"/>
    <property type="evidence" value="ECO:0007669"/>
    <property type="project" value="UniProtKB-SubCell"/>
</dbReference>
<dbReference type="GO" id="GO:0004519">
    <property type="term" value="F:endonuclease activity"/>
    <property type="evidence" value="ECO:0007669"/>
    <property type="project" value="UniProtKB-UniRule"/>
</dbReference>
<dbReference type="GO" id="GO:0046872">
    <property type="term" value="F:metal ion binding"/>
    <property type="evidence" value="ECO:0007669"/>
    <property type="project" value="UniProtKB-UniRule"/>
</dbReference>
<dbReference type="GO" id="GO:0070651">
    <property type="term" value="P:nonfunctional rRNA decay"/>
    <property type="evidence" value="ECO:0007669"/>
    <property type="project" value="TreeGrafter"/>
</dbReference>
<dbReference type="GO" id="GO:0070966">
    <property type="term" value="P:nuclear-transcribed mRNA catabolic process, no-go decay"/>
    <property type="evidence" value="ECO:0007669"/>
    <property type="project" value="InterPro"/>
</dbReference>
<dbReference type="GO" id="GO:0070481">
    <property type="term" value="P:nuclear-transcribed mRNA catabolic process, non-stop decay"/>
    <property type="evidence" value="ECO:0007669"/>
    <property type="project" value="InterPro"/>
</dbReference>
<dbReference type="GO" id="GO:0032790">
    <property type="term" value="P:ribosome disassembly"/>
    <property type="evidence" value="ECO:0007669"/>
    <property type="project" value="TreeGrafter"/>
</dbReference>
<dbReference type="GO" id="GO:0071025">
    <property type="term" value="P:RNA surveillance"/>
    <property type="evidence" value="ECO:0007669"/>
    <property type="project" value="InterPro"/>
</dbReference>
<dbReference type="FunFam" id="2.30.30.870:FF:000002">
    <property type="entry name" value="Protein pelota homolog"/>
    <property type="match status" value="1"/>
</dbReference>
<dbReference type="FunFam" id="3.30.420.60:FF:000005">
    <property type="entry name" value="Protein pelota homolog"/>
    <property type="match status" value="1"/>
</dbReference>
<dbReference type="Gene3D" id="3.30.1330.30">
    <property type="match status" value="1"/>
</dbReference>
<dbReference type="Gene3D" id="3.30.420.60">
    <property type="entry name" value="eRF1 domain 2"/>
    <property type="match status" value="1"/>
</dbReference>
<dbReference type="Gene3D" id="2.30.30.870">
    <property type="entry name" value="Pelota, domain A"/>
    <property type="match status" value="1"/>
</dbReference>
<dbReference type="HAMAP" id="MF_01853">
    <property type="entry name" value="PelO"/>
    <property type="match status" value="1"/>
</dbReference>
<dbReference type="InterPro" id="IPR042226">
    <property type="entry name" value="eFR1_2_sf"/>
</dbReference>
<dbReference type="InterPro" id="IPR005140">
    <property type="entry name" value="eRF1_1_Pelota"/>
</dbReference>
<dbReference type="InterPro" id="IPR005142">
    <property type="entry name" value="eRF1_3"/>
</dbReference>
<dbReference type="InterPro" id="IPR038069">
    <property type="entry name" value="Pelota/DOM34_N"/>
</dbReference>
<dbReference type="InterPro" id="IPR023521">
    <property type="entry name" value="Pelota_arc"/>
</dbReference>
<dbReference type="InterPro" id="IPR029064">
    <property type="entry name" value="Ribosomal_eL30-like_sf"/>
</dbReference>
<dbReference type="InterPro" id="IPR004405">
    <property type="entry name" value="Transl-rel_pelota"/>
</dbReference>
<dbReference type="NCBIfam" id="TIGR00111">
    <property type="entry name" value="pelota"/>
    <property type="match status" value="1"/>
</dbReference>
<dbReference type="PANTHER" id="PTHR10853">
    <property type="entry name" value="PELOTA"/>
    <property type="match status" value="1"/>
</dbReference>
<dbReference type="PANTHER" id="PTHR10853:SF0">
    <property type="entry name" value="PROTEIN PELOTA HOMOLOG"/>
    <property type="match status" value="1"/>
</dbReference>
<dbReference type="Pfam" id="PF03463">
    <property type="entry name" value="eRF1_1"/>
    <property type="match status" value="1"/>
</dbReference>
<dbReference type="Pfam" id="PF03465">
    <property type="entry name" value="eRF1_3"/>
    <property type="match status" value="1"/>
</dbReference>
<dbReference type="SMART" id="SM01194">
    <property type="entry name" value="eRF1_1"/>
    <property type="match status" value="1"/>
</dbReference>
<dbReference type="SUPFAM" id="SSF159065">
    <property type="entry name" value="Dom34/Pelota N-terminal domain-like"/>
    <property type="match status" value="1"/>
</dbReference>
<dbReference type="SUPFAM" id="SSF55315">
    <property type="entry name" value="L30e-like"/>
    <property type="match status" value="1"/>
</dbReference>
<dbReference type="SUPFAM" id="SSF53137">
    <property type="entry name" value="Translational machinery components"/>
    <property type="match status" value="1"/>
</dbReference>
<feature type="chain" id="PRO_1000216143" description="Protein pelota homolog">
    <location>
        <begin position="1"/>
        <end position="344"/>
    </location>
</feature>
<accession>C3N8Q8</accession>
<organism>
    <name type="scientific">Saccharolobus islandicus (strain Y.G.57.14 / Yellowstone #1)</name>
    <name type="common">Sulfolobus islandicus</name>
    <dbReference type="NCBI Taxonomy" id="439386"/>
    <lineage>
        <taxon>Archaea</taxon>
        <taxon>Thermoproteota</taxon>
        <taxon>Thermoprotei</taxon>
        <taxon>Sulfolobales</taxon>
        <taxon>Sulfolobaceae</taxon>
        <taxon>Saccharolobus</taxon>
    </lineage>
</organism>
<name>PELO_SACI7</name>